<sequence length="403" mass="47233">MHLIFFFSYFLRRYLLLLCAILILRAPLAHSLIPPLTCVNTGTVESDVTGIRFDRCLDTDSLAKISLSTVMSKARVYTDVNVIRPKDYWDYESLNVQWGEQDDYEVVRKVGRGKYSEVFEGINMNNNEKCIIKILKPVKKKKIRREIKILQNLCGGPNIVKLLDVVRDQHSKTPSLIFEYVNSTDFKVLYPTLTDYDIRYYIYELLKALDFCHSQGIMHRDVKPHNVMIDHELRKLRLIDWGLAEFYHPGKEYNVRVASRYFKGPELLVDLQDYDYSLDMWSLGCMFAGMIFRKEPFFYGHDNQDQLVKIAKVLGTDELNAYLNKYQLELDTQLEALVGRHSRKPWSKFINADNRHLVSPEAIDYLDKLLRYDHQDRLTAKEAMAHPYFAQVRAAESSRMRTQ</sequence>
<keyword id="KW-0025">Alternative splicing</keyword>
<keyword id="KW-0067">ATP-binding</keyword>
<keyword id="KW-0325">Glycoprotein</keyword>
<keyword id="KW-0418">Kinase</keyword>
<keyword id="KW-0547">Nucleotide-binding</keyword>
<keyword id="KW-0539">Nucleus</keyword>
<keyword id="KW-1185">Reference proteome</keyword>
<keyword id="KW-0723">Serine/threonine-protein kinase</keyword>
<keyword id="KW-0732">Signal</keyword>
<keyword id="KW-0808">Transferase</keyword>
<accession>Q08466</accession>
<accession>Q8H120</accession>
<accession>Q8H765</accession>
<accession>Q9SN18</accession>
<organism>
    <name type="scientific">Arabidopsis thaliana</name>
    <name type="common">Mouse-ear cress</name>
    <dbReference type="NCBI Taxonomy" id="3702"/>
    <lineage>
        <taxon>Eukaryota</taxon>
        <taxon>Viridiplantae</taxon>
        <taxon>Streptophyta</taxon>
        <taxon>Embryophyta</taxon>
        <taxon>Tracheophyta</taxon>
        <taxon>Spermatophyta</taxon>
        <taxon>Magnoliopsida</taxon>
        <taxon>eudicotyledons</taxon>
        <taxon>Gunneridae</taxon>
        <taxon>Pentapetalae</taxon>
        <taxon>rosids</taxon>
        <taxon>malvids</taxon>
        <taxon>Brassicales</taxon>
        <taxon>Brassicaceae</taxon>
        <taxon>Camelineae</taxon>
        <taxon>Arabidopsis</taxon>
    </lineage>
</organism>
<protein>
    <recommendedName>
        <fullName>Casein kinase II subunit alpha-2</fullName>
        <shortName>CK II</shortName>
        <ecNumber>2.7.11.1</ecNumber>
    </recommendedName>
    <alternativeName>
        <fullName evidence="11">Casein kinase alpha 2</fullName>
        <shortName evidence="10">AtCKA2</shortName>
    </alternativeName>
</protein>
<proteinExistence type="evidence at protein level"/>
<reference key="1">
    <citation type="journal article" date="1993" name="Plant Mol. Biol.">
        <title>Cloning and characterization of two cDNAs encoding casein kinase II catalytic subunits in Arabidopsis thaliana.</title>
        <authorList>
            <person name="Mizoguchi T."/>
            <person name="Yamaguchi-Shinozaki K."/>
            <person name="Hayashida N."/>
            <person name="Kamada H."/>
            <person name="Shinozaki K."/>
        </authorList>
    </citation>
    <scope>NUCLEOTIDE SEQUENCE [MRNA] (ISOFORM 2)</scope>
    <scope>TISSUE SPECIFICITY</scope>
    <source>
        <strain>cv. Columbia</strain>
    </source>
</reference>
<reference key="2">
    <citation type="journal article" date="2000" name="Nature">
        <title>Sequence and analysis of chromosome 3 of the plant Arabidopsis thaliana.</title>
        <authorList>
            <person name="Salanoubat M."/>
            <person name="Lemcke K."/>
            <person name="Rieger M."/>
            <person name="Ansorge W."/>
            <person name="Unseld M."/>
            <person name="Fartmann B."/>
            <person name="Valle G."/>
            <person name="Bloecker H."/>
            <person name="Perez-Alonso M."/>
            <person name="Obermaier B."/>
            <person name="Delseny M."/>
            <person name="Boutry M."/>
            <person name="Grivell L.A."/>
            <person name="Mache R."/>
            <person name="Puigdomenech P."/>
            <person name="De Simone V."/>
            <person name="Choisne N."/>
            <person name="Artiguenave F."/>
            <person name="Robert C."/>
            <person name="Brottier P."/>
            <person name="Wincker P."/>
            <person name="Cattolico L."/>
            <person name="Weissenbach J."/>
            <person name="Saurin W."/>
            <person name="Quetier F."/>
            <person name="Schaefer M."/>
            <person name="Mueller-Auer S."/>
            <person name="Gabel C."/>
            <person name="Fuchs M."/>
            <person name="Benes V."/>
            <person name="Wurmbach E."/>
            <person name="Drzonek H."/>
            <person name="Erfle H."/>
            <person name="Jordan N."/>
            <person name="Bangert S."/>
            <person name="Wiedelmann R."/>
            <person name="Kranz H."/>
            <person name="Voss H."/>
            <person name="Holland R."/>
            <person name="Brandt P."/>
            <person name="Nyakatura G."/>
            <person name="Vezzi A."/>
            <person name="D'Angelo M."/>
            <person name="Pallavicini A."/>
            <person name="Toppo S."/>
            <person name="Simionati B."/>
            <person name="Conrad A."/>
            <person name="Hornischer K."/>
            <person name="Kauer G."/>
            <person name="Loehnert T.-H."/>
            <person name="Nordsiek G."/>
            <person name="Reichelt J."/>
            <person name="Scharfe M."/>
            <person name="Schoen O."/>
            <person name="Bargues M."/>
            <person name="Terol J."/>
            <person name="Climent J."/>
            <person name="Navarro P."/>
            <person name="Collado C."/>
            <person name="Perez-Perez A."/>
            <person name="Ottenwaelder B."/>
            <person name="Duchemin D."/>
            <person name="Cooke R."/>
            <person name="Laudie M."/>
            <person name="Berger-Llauro C."/>
            <person name="Purnelle B."/>
            <person name="Masuy D."/>
            <person name="de Haan M."/>
            <person name="Maarse A.C."/>
            <person name="Alcaraz J.-P."/>
            <person name="Cottet A."/>
            <person name="Casacuberta E."/>
            <person name="Monfort A."/>
            <person name="Argiriou A."/>
            <person name="Flores M."/>
            <person name="Liguori R."/>
            <person name="Vitale D."/>
            <person name="Mannhaupt G."/>
            <person name="Haase D."/>
            <person name="Schoof H."/>
            <person name="Rudd S."/>
            <person name="Zaccaria P."/>
            <person name="Mewes H.-W."/>
            <person name="Mayer K.F.X."/>
            <person name="Kaul S."/>
            <person name="Town C.D."/>
            <person name="Koo H.L."/>
            <person name="Tallon L.J."/>
            <person name="Jenkins J."/>
            <person name="Rooney T."/>
            <person name="Rizzo M."/>
            <person name="Walts A."/>
            <person name="Utterback T."/>
            <person name="Fujii C.Y."/>
            <person name="Shea T.P."/>
            <person name="Creasy T.H."/>
            <person name="Haas B."/>
            <person name="Maiti R."/>
            <person name="Wu D."/>
            <person name="Peterson J."/>
            <person name="Van Aken S."/>
            <person name="Pai G."/>
            <person name="Militscher J."/>
            <person name="Sellers P."/>
            <person name="Gill J.E."/>
            <person name="Feldblyum T.V."/>
            <person name="Preuss D."/>
            <person name="Lin X."/>
            <person name="Nierman W.C."/>
            <person name="Salzberg S.L."/>
            <person name="White O."/>
            <person name="Venter J.C."/>
            <person name="Fraser C.M."/>
            <person name="Kaneko T."/>
            <person name="Nakamura Y."/>
            <person name="Sato S."/>
            <person name="Kato T."/>
            <person name="Asamizu E."/>
            <person name="Sasamoto S."/>
            <person name="Kimura T."/>
            <person name="Idesawa K."/>
            <person name="Kawashima K."/>
            <person name="Kishida Y."/>
            <person name="Kiyokawa C."/>
            <person name="Kohara M."/>
            <person name="Matsumoto M."/>
            <person name="Matsuno A."/>
            <person name="Muraki A."/>
            <person name="Nakayama S."/>
            <person name="Nakazaki N."/>
            <person name="Shinpo S."/>
            <person name="Takeuchi C."/>
            <person name="Wada T."/>
            <person name="Watanabe A."/>
            <person name="Yamada M."/>
            <person name="Yasuda M."/>
            <person name="Tabata S."/>
        </authorList>
    </citation>
    <scope>NUCLEOTIDE SEQUENCE [LARGE SCALE GENOMIC DNA]</scope>
    <source>
        <strain>cv. Columbia</strain>
    </source>
</reference>
<reference key="3">
    <citation type="journal article" date="2017" name="Plant J.">
        <title>Araport11: a complete reannotation of the Arabidopsis thaliana reference genome.</title>
        <authorList>
            <person name="Cheng C.Y."/>
            <person name="Krishnakumar V."/>
            <person name="Chan A.P."/>
            <person name="Thibaud-Nissen F."/>
            <person name="Schobel S."/>
            <person name="Town C.D."/>
        </authorList>
    </citation>
    <scope>GENOME REANNOTATION</scope>
    <source>
        <strain>cv. Columbia</strain>
    </source>
</reference>
<reference key="4">
    <citation type="journal article" date="2003" name="Science">
        <title>Empirical analysis of transcriptional activity in the Arabidopsis genome.</title>
        <authorList>
            <person name="Yamada K."/>
            <person name="Lim J."/>
            <person name="Dale J.M."/>
            <person name="Chen H."/>
            <person name="Shinn P."/>
            <person name="Palm C.J."/>
            <person name="Southwick A.M."/>
            <person name="Wu H.C."/>
            <person name="Kim C.J."/>
            <person name="Nguyen M."/>
            <person name="Pham P.K."/>
            <person name="Cheuk R.F."/>
            <person name="Karlin-Newmann G."/>
            <person name="Liu S.X."/>
            <person name="Lam B."/>
            <person name="Sakano H."/>
            <person name="Wu T."/>
            <person name="Yu G."/>
            <person name="Miranda M."/>
            <person name="Quach H.L."/>
            <person name="Tripp M."/>
            <person name="Chang C.H."/>
            <person name="Lee J.M."/>
            <person name="Toriumi M.J."/>
            <person name="Chan M.M."/>
            <person name="Tang C.C."/>
            <person name="Onodera C.S."/>
            <person name="Deng J.M."/>
            <person name="Akiyama K."/>
            <person name="Ansari Y."/>
            <person name="Arakawa T."/>
            <person name="Banh J."/>
            <person name="Banno F."/>
            <person name="Bowser L."/>
            <person name="Brooks S.Y."/>
            <person name="Carninci P."/>
            <person name="Chao Q."/>
            <person name="Choy N."/>
            <person name="Enju A."/>
            <person name="Goldsmith A.D."/>
            <person name="Gurjal M."/>
            <person name="Hansen N.F."/>
            <person name="Hayashizaki Y."/>
            <person name="Johnson-Hopson C."/>
            <person name="Hsuan V.W."/>
            <person name="Iida K."/>
            <person name="Karnes M."/>
            <person name="Khan S."/>
            <person name="Koesema E."/>
            <person name="Ishida J."/>
            <person name="Jiang P.X."/>
            <person name="Jones T."/>
            <person name="Kawai J."/>
            <person name="Kamiya A."/>
            <person name="Meyers C."/>
            <person name="Nakajima M."/>
            <person name="Narusaka M."/>
            <person name="Seki M."/>
            <person name="Sakurai T."/>
            <person name="Satou M."/>
            <person name="Tamse R."/>
            <person name="Vaysberg M."/>
            <person name="Wallender E.K."/>
            <person name="Wong C."/>
            <person name="Yamamura Y."/>
            <person name="Yuan S."/>
            <person name="Shinozaki K."/>
            <person name="Davis R.W."/>
            <person name="Theologis A."/>
            <person name="Ecker J.R."/>
        </authorList>
    </citation>
    <scope>NUCLEOTIDE SEQUENCE [LARGE SCALE MRNA] (ISOFORM 1)</scope>
    <source>
        <strain>cv. Columbia</strain>
    </source>
</reference>
<reference key="5">
    <citation type="journal article" date="2006" name="Plant Cell Physiol.">
        <title>An extensive survey of CK2 alpha and beta subunits in Arabidopsis: multiple isoforms exhibit differential subcellular localization.</title>
        <authorList>
            <person name="Salinas P."/>
            <person name="Fuentes D."/>
            <person name="Vidal E."/>
            <person name="Jordana X."/>
            <person name="Echeverria M."/>
            <person name="Holuigue L."/>
        </authorList>
    </citation>
    <scope>SUBCELLULAR LOCATION</scope>
</reference>
<reference key="6">
    <citation type="journal article" date="2009" name="J. Biol. Chem.">
        <title>Differential phosphorylation of plant translation initiation factors by Arabidopsis thaliana CK2 holoenzymes.</title>
        <authorList>
            <person name="Dennis M.D."/>
            <person name="Browning K.S."/>
        </authorList>
    </citation>
    <scope>FUNCTION</scope>
    <scope>SUBUNIT</scope>
</reference>
<reference key="7">
    <citation type="journal article" date="2011" name="J. Biol. Chem.">
        <title>Phosphorylation by CK2 enhances the rapid light-induced degradation of phytochrome interacting factor 1 in Arabidopsis.</title>
        <authorList>
            <person name="Bu Q."/>
            <person name="Zhu L."/>
            <person name="Dennis M.D."/>
            <person name="Yu L."/>
            <person name="Lu S.X."/>
            <person name="Person M.D."/>
            <person name="Tobin E.M."/>
            <person name="Browning K.S."/>
            <person name="Huq E."/>
        </authorList>
    </citation>
    <scope>FUNCTION</scope>
</reference>
<reference key="8">
    <citation type="journal article" date="2011" name="Plant Physiol.">
        <title>A role for protein kinase casein kinase2 alpha-subunits in the Arabidopsis circadian clock.</title>
        <authorList>
            <person name="Lu S.X."/>
            <person name="Liu H."/>
            <person name="Knowles S.M."/>
            <person name="Li J."/>
            <person name="Ma L."/>
            <person name="Tobin E.M."/>
            <person name="Lin C."/>
        </authorList>
    </citation>
    <scope>FUNCTION</scope>
    <scope>DISRUPTION PHENOTYPE</scope>
</reference>
<name>CSK22_ARATH</name>
<evidence type="ECO:0000250" key="1">
    <source>
        <dbReference type="UniProtKB" id="Q08467"/>
    </source>
</evidence>
<evidence type="ECO:0000255" key="2"/>
<evidence type="ECO:0000255" key="3">
    <source>
        <dbReference type="PROSITE-ProRule" id="PRU00159"/>
    </source>
</evidence>
<evidence type="ECO:0000255" key="4">
    <source>
        <dbReference type="PROSITE-ProRule" id="PRU10027"/>
    </source>
</evidence>
<evidence type="ECO:0000269" key="5">
    <source>
    </source>
</evidence>
<evidence type="ECO:0000269" key="6">
    <source>
    </source>
</evidence>
<evidence type="ECO:0000269" key="7">
    <source>
    </source>
</evidence>
<evidence type="ECO:0000269" key="8">
    <source>
    </source>
</evidence>
<evidence type="ECO:0000269" key="9">
    <source>
    </source>
</evidence>
<evidence type="ECO:0000303" key="10">
    <source>
    </source>
</evidence>
<evidence type="ECO:0000305" key="11"/>
<dbReference type="EC" id="2.7.11.1"/>
<dbReference type="EMBL" id="D10247">
    <property type="protein sequence ID" value="BAA01091.1"/>
    <property type="molecule type" value="mRNA"/>
</dbReference>
<dbReference type="EMBL" id="AL132978">
    <property type="protein sequence ID" value="CAB62108.1"/>
    <property type="molecule type" value="Genomic_DNA"/>
</dbReference>
<dbReference type="EMBL" id="CP002686">
    <property type="protein sequence ID" value="AEE78615.1"/>
    <property type="molecule type" value="Genomic_DNA"/>
</dbReference>
<dbReference type="EMBL" id="AF370308">
    <property type="protein sequence ID" value="AAK44123.2"/>
    <property type="molecule type" value="mRNA"/>
</dbReference>
<dbReference type="EMBL" id="BT000888">
    <property type="protein sequence ID" value="AAN41288.1"/>
    <property type="molecule type" value="mRNA"/>
</dbReference>
<dbReference type="PIR" id="S31099">
    <property type="entry name" value="S31099"/>
</dbReference>
<dbReference type="PIR" id="T45853">
    <property type="entry name" value="T45853"/>
</dbReference>
<dbReference type="RefSeq" id="NP_190569.2">
    <molecule id="Q08466-1"/>
    <property type="nucleotide sequence ID" value="NM_114860.4"/>
</dbReference>
<dbReference type="SMR" id="Q08466"/>
<dbReference type="BioGRID" id="9480">
    <property type="interactions" value="26"/>
</dbReference>
<dbReference type="FunCoup" id="Q08466">
    <property type="interactions" value="4713"/>
</dbReference>
<dbReference type="IntAct" id="Q08466">
    <property type="interactions" value="1"/>
</dbReference>
<dbReference type="STRING" id="3702.Q08466"/>
<dbReference type="GlyCosmos" id="Q08466">
    <property type="glycosylation" value="1 site, No reported glycans"/>
</dbReference>
<dbReference type="GlyGen" id="Q08466">
    <property type="glycosylation" value="1 site"/>
</dbReference>
<dbReference type="iPTMnet" id="Q08466"/>
<dbReference type="PaxDb" id="3702-AT3G50000.1"/>
<dbReference type="ProteomicsDB" id="220498">
    <molecule id="Q08466-1"/>
</dbReference>
<dbReference type="EnsemblPlants" id="AT3G50000.1">
    <molecule id="Q08466-1"/>
    <property type="protein sequence ID" value="AT3G50000.1"/>
    <property type="gene ID" value="AT3G50000"/>
</dbReference>
<dbReference type="GeneID" id="824162"/>
<dbReference type="Gramene" id="AT3G50000.1">
    <molecule id="Q08466-1"/>
    <property type="protein sequence ID" value="AT3G50000.1"/>
    <property type="gene ID" value="AT3G50000"/>
</dbReference>
<dbReference type="KEGG" id="ath:AT3G50000"/>
<dbReference type="Araport" id="AT3G50000"/>
<dbReference type="TAIR" id="AT3G50000">
    <property type="gene designation" value="CKA2"/>
</dbReference>
<dbReference type="eggNOG" id="KOG0668">
    <property type="taxonomic scope" value="Eukaryota"/>
</dbReference>
<dbReference type="HOGENOM" id="CLU_000288_70_4_1"/>
<dbReference type="InParanoid" id="Q08466"/>
<dbReference type="OMA" id="ECHMIEW"/>
<dbReference type="BRENDA" id="2.7.11.1">
    <property type="organism ID" value="399"/>
</dbReference>
<dbReference type="CD-CODE" id="4299E36E">
    <property type="entry name" value="Nucleolus"/>
</dbReference>
<dbReference type="PRO" id="PR:Q08466"/>
<dbReference type="Proteomes" id="UP000006548">
    <property type="component" value="Chromosome 3"/>
</dbReference>
<dbReference type="ExpressionAtlas" id="Q08466">
    <property type="expression patterns" value="baseline and differential"/>
</dbReference>
<dbReference type="GO" id="GO:0005730">
    <property type="term" value="C:nucleolus"/>
    <property type="evidence" value="ECO:0000314"/>
    <property type="project" value="UniProtKB"/>
</dbReference>
<dbReference type="GO" id="GO:0005634">
    <property type="term" value="C:nucleus"/>
    <property type="evidence" value="ECO:0000314"/>
    <property type="project" value="UniProtKB"/>
</dbReference>
<dbReference type="GO" id="GO:0005524">
    <property type="term" value="F:ATP binding"/>
    <property type="evidence" value="ECO:0007669"/>
    <property type="project" value="UniProtKB-KW"/>
</dbReference>
<dbReference type="GO" id="GO:0106310">
    <property type="term" value="F:protein serine kinase activity"/>
    <property type="evidence" value="ECO:0007669"/>
    <property type="project" value="RHEA"/>
</dbReference>
<dbReference type="GO" id="GO:0004674">
    <property type="term" value="F:protein serine/threonine kinase activity"/>
    <property type="evidence" value="ECO:0007669"/>
    <property type="project" value="UniProtKB-KW"/>
</dbReference>
<dbReference type="GO" id="GO:0042752">
    <property type="term" value="P:regulation of circadian rhythm"/>
    <property type="evidence" value="ECO:0000315"/>
    <property type="project" value="UniProtKB"/>
</dbReference>
<dbReference type="CDD" id="cd14132">
    <property type="entry name" value="STKc_CK2_alpha"/>
    <property type="match status" value="1"/>
</dbReference>
<dbReference type="FunFam" id="1.10.510.10:FF:000059">
    <property type="entry name" value="Casein kinase II subunit alpha"/>
    <property type="match status" value="1"/>
</dbReference>
<dbReference type="FunFam" id="3.30.200.20:FF:000088">
    <property type="entry name" value="Casein kinase II subunit alpha"/>
    <property type="match status" value="1"/>
</dbReference>
<dbReference type="Gene3D" id="3.30.200.20">
    <property type="entry name" value="Phosphorylase Kinase, domain 1"/>
    <property type="match status" value="2"/>
</dbReference>
<dbReference type="Gene3D" id="1.10.510.10">
    <property type="entry name" value="Transferase(Phosphotransferase) domain 1"/>
    <property type="match status" value="1"/>
</dbReference>
<dbReference type="InterPro" id="IPR045216">
    <property type="entry name" value="CK2_alpha"/>
</dbReference>
<dbReference type="InterPro" id="IPR011009">
    <property type="entry name" value="Kinase-like_dom_sf"/>
</dbReference>
<dbReference type="InterPro" id="IPR000719">
    <property type="entry name" value="Prot_kinase_dom"/>
</dbReference>
<dbReference type="InterPro" id="IPR017441">
    <property type="entry name" value="Protein_kinase_ATP_BS"/>
</dbReference>
<dbReference type="InterPro" id="IPR008271">
    <property type="entry name" value="Ser/Thr_kinase_AS"/>
</dbReference>
<dbReference type="PANTHER" id="PTHR24054">
    <property type="entry name" value="CASEIN KINASE II SUBUNIT ALPHA"/>
    <property type="match status" value="1"/>
</dbReference>
<dbReference type="PANTHER" id="PTHR24054:SF40">
    <property type="entry name" value="CASEIN KINASE II SUBUNIT ALPHA-2"/>
    <property type="match status" value="1"/>
</dbReference>
<dbReference type="Pfam" id="PF00069">
    <property type="entry name" value="Pkinase"/>
    <property type="match status" value="1"/>
</dbReference>
<dbReference type="SMART" id="SM00220">
    <property type="entry name" value="S_TKc"/>
    <property type="match status" value="1"/>
</dbReference>
<dbReference type="SUPFAM" id="SSF56112">
    <property type="entry name" value="Protein kinase-like (PK-like)"/>
    <property type="match status" value="1"/>
</dbReference>
<dbReference type="PROSITE" id="PS00107">
    <property type="entry name" value="PROTEIN_KINASE_ATP"/>
    <property type="match status" value="1"/>
</dbReference>
<dbReference type="PROSITE" id="PS50011">
    <property type="entry name" value="PROTEIN_KINASE_DOM"/>
    <property type="match status" value="1"/>
</dbReference>
<dbReference type="PROSITE" id="PS00108">
    <property type="entry name" value="PROTEIN_KINASE_ST"/>
    <property type="match status" value="1"/>
</dbReference>
<feature type="signal peptide" evidence="2">
    <location>
        <begin position="1"/>
        <end position="31"/>
    </location>
</feature>
<feature type="chain" id="PRO_0000417492" description="Casein kinase II subunit alpha-2">
    <location>
        <begin position="32"/>
        <end position="403"/>
    </location>
</feature>
<feature type="domain" description="Protein kinase" evidence="3">
    <location>
        <begin position="104"/>
        <end position="389"/>
    </location>
</feature>
<feature type="active site" description="Proton acceptor" evidence="3 4">
    <location>
        <position position="221"/>
    </location>
</feature>
<feature type="binding site" evidence="3">
    <location>
        <begin position="110"/>
        <end position="118"/>
    </location>
    <ligand>
        <name>ATP</name>
        <dbReference type="ChEBI" id="CHEBI:30616"/>
    </ligand>
</feature>
<feature type="binding site" evidence="3">
    <location>
        <position position="133"/>
    </location>
    <ligand>
        <name>ATP</name>
        <dbReference type="ChEBI" id="CHEBI:30616"/>
    </ligand>
</feature>
<feature type="glycosylation site" description="N-linked (GlcNAc...) asparagine" evidence="2">
    <location>
        <position position="182"/>
    </location>
</feature>
<feature type="splice variant" id="VSP_043760" description="In isoform 2." evidence="10">
    <location>
        <begin position="1"/>
        <end position="70"/>
    </location>
</feature>
<feature type="sequence conflict" description="In Ref. 1; BAA01091." evidence="11" ref="1">
    <original>K</original>
    <variation>E</variation>
    <location>
        <position position="142"/>
    </location>
</feature>
<feature type="sequence conflict" description="In Ref. 1; BAA01091." evidence="11" ref="1">
    <original>E</original>
    <variation>G</variation>
    <location>
        <position position="232"/>
    </location>
</feature>
<gene>
    <name evidence="10" type="primary">CKA2</name>
    <name type="ordered locus">At3g50000</name>
    <name type="ORF">F3A4.80</name>
</gene>
<comment type="function">
    <text evidence="1 6 7 8">Casein kinases are operationally defined by their preferential utilization of acidic proteins such as caseins as substrates (By similarity). The alpha chain contains the catalytic site. The tetrameric holoenzyme CK2, composed of two alpha and two beta subunits, phosphorylates the transcription factor PIF1 after an exposure to light, resulting in a proteasome-dependent degradation of PIF1 and promotion of photomorphogenesis (PubMed:21330376). CK2 phosphorylates translation initiation factors. May participate in the regulation of the initiation of translation (PubMed:19509278). Acts as circadian clock component that maintains the correct period length through phosphorylation of CCA1 (PubMed:21900482). May act as an ectokinase that phosphorylates several extracellular proteins.</text>
</comment>
<comment type="catalytic activity">
    <reaction>
        <text>L-seryl-[protein] + ATP = O-phospho-L-seryl-[protein] + ADP + H(+)</text>
        <dbReference type="Rhea" id="RHEA:17989"/>
        <dbReference type="Rhea" id="RHEA-COMP:9863"/>
        <dbReference type="Rhea" id="RHEA-COMP:11604"/>
        <dbReference type="ChEBI" id="CHEBI:15378"/>
        <dbReference type="ChEBI" id="CHEBI:29999"/>
        <dbReference type="ChEBI" id="CHEBI:30616"/>
        <dbReference type="ChEBI" id="CHEBI:83421"/>
        <dbReference type="ChEBI" id="CHEBI:456216"/>
        <dbReference type="EC" id="2.7.11.1"/>
    </reaction>
</comment>
<comment type="catalytic activity">
    <reaction>
        <text>L-threonyl-[protein] + ATP = O-phospho-L-threonyl-[protein] + ADP + H(+)</text>
        <dbReference type="Rhea" id="RHEA:46608"/>
        <dbReference type="Rhea" id="RHEA-COMP:11060"/>
        <dbReference type="Rhea" id="RHEA-COMP:11605"/>
        <dbReference type="ChEBI" id="CHEBI:15378"/>
        <dbReference type="ChEBI" id="CHEBI:30013"/>
        <dbReference type="ChEBI" id="CHEBI:30616"/>
        <dbReference type="ChEBI" id="CHEBI:61977"/>
        <dbReference type="ChEBI" id="CHEBI:456216"/>
        <dbReference type="EC" id="2.7.11.1"/>
    </reaction>
</comment>
<comment type="subunit">
    <text evidence="6">Heterotetramer of two catalytic alpha subunits and two regulatory beta subunits.</text>
</comment>
<comment type="subcellular location">
    <subcellularLocation>
        <location evidence="5">Nucleus</location>
    </subcellularLocation>
    <subcellularLocation>
        <location evidence="5">Nucleus</location>
        <location evidence="5">Nucleolus</location>
    </subcellularLocation>
    <text evidence="5">Enriched in the nucleolus.</text>
</comment>
<comment type="alternative products">
    <event type="alternative splicing"/>
    <isoform>
        <id>Q08466-1</id>
        <name>1</name>
        <sequence type="displayed"/>
    </isoform>
    <isoform>
        <id>Q08466-2</id>
        <name>2</name>
        <sequence type="described" ref="VSP_043760"/>
    </isoform>
</comment>
<comment type="tissue specificity">
    <text evidence="9">Seems to be present in all plant organs. But seems to be more expressed than CKA1.</text>
</comment>
<comment type="disruption phenotype">
    <text evidence="8">No visible phenotype under normal growth conditions, but the triple mutant cka1, cka2 and cka3 show altered circadian rhythms and delayed flowering under long day conditions.</text>
</comment>
<comment type="similarity">
    <text evidence="3">Belongs to the protein kinase superfamily. Ser/Thr protein kinase family. CK2 subfamily.</text>
</comment>